<feature type="chain" id="PRO_0000453708" description="Aspergilol synthase AuAP450">
    <location>
        <begin position="1"/>
        <end position="548"/>
    </location>
</feature>
<feature type="transmembrane region" description="Helical" evidence="2">
    <location>
        <begin position="38"/>
        <end position="58"/>
    </location>
</feature>
<feature type="binding site" description="axial binding residue" evidence="1">
    <location>
        <position position="489"/>
    </location>
    <ligand>
        <name>heme</name>
        <dbReference type="ChEBI" id="CHEBI:30413"/>
    </ligand>
    <ligandPart>
        <name>Fe</name>
        <dbReference type="ChEBI" id="CHEBI:18248"/>
    </ligandPart>
</feature>
<gene>
    <name evidence="4" type="primary">AuAP450</name>
</gene>
<name>AP450_ASPUT</name>
<dbReference type="EC" id="1.-.-.-" evidence="3"/>
<dbReference type="EMBL" id="MW387951">
    <property type="protein sequence ID" value="QRF92543.1"/>
    <property type="molecule type" value="mRNA"/>
</dbReference>
<dbReference type="SMR" id="P9WEP1"/>
<dbReference type="UniPathway" id="UPA00213"/>
<dbReference type="GO" id="GO:0016020">
    <property type="term" value="C:membrane"/>
    <property type="evidence" value="ECO:0007669"/>
    <property type="project" value="UniProtKB-SubCell"/>
</dbReference>
<dbReference type="GO" id="GO:0020037">
    <property type="term" value="F:heme binding"/>
    <property type="evidence" value="ECO:0007669"/>
    <property type="project" value="InterPro"/>
</dbReference>
<dbReference type="GO" id="GO:0005506">
    <property type="term" value="F:iron ion binding"/>
    <property type="evidence" value="ECO:0007669"/>
    <property type="project" value="InterPro"/>
</dbReference>
<dbReference type="GO" id="GO:0004497">
    <property type="term" value="F:monooxygenase activity"/>
    <property type="evidence" value="ECO:0007669"/>
    <property type="project" value="UniProtKB-KW"/>
</dbReference>
<dbReference type="GO" id="GO:0016705">
    <property type="term" value="F:oxidoreductase activity, acting on paired donors, with incorporation or reduction of molecular oxygen"/>
    <property type="evidence" value="ECO:0007669"/>
    <property type="project" value="InterPro"/>
</dbReference>
<dbReference type="GO" id="GO:0019748">
    <property type="term" value="P:secondary metabolic process"/>
    <property type="evidence" value="ECO:0007669"/>
    <property type="project" value="UniProtKB-ARBA"/>
</dbReference>
<dbReference type="GO" id="GO:0016114">
    <property type="term" value="P:terpenoid biosynthetic process"/>
    <property type="evidence" value="ECO:0007669"/>
    <property type="project" value="UniProtKB-UniPathway"/>
</dbReference>
<dbReference type="CDD" id="cd11041">
    <property type="entry name" value="CYP503A1-like"/>
    <property type="match status" value="1"/>
</dbReference>
<dbReference type="Gene3D" id="1.10.630.10">
    <property type="entry name" value="Cytochrome P450"/>
    <property type="match status" value="1"/>
</dbReference>
<dbReference type="InterPro" id="IPR001128">
    <property type="entry name" value="Cyt_P450"/>
</dbReference>
<dbReference type="InterPro" id="IPR002403">
    <property type="entry name" value="Cyt_P450_E_grp-IV"/>
</dbReference>
<dbReference type="InterPro" id="IPR036396">
    <property type="entry name" value="Cyt_P450_sf"/>
</dbReference>
<dbReference type="PANTHER" id="PTHR46206">
    <property type="entry name" value="CYTOCHROME P450"/>
    <property type="match status" value="1"/>
</dbReference>
<dbReference type="Pfam" id="PF00067">
    <property type="entry name" value="p450"/>
    <property type="match status" value="1"/>
</dbReference>
<dbReference type="PRINTS" id="PR00465">
    <property type="entry name" value="EP450IV"/>
</dbReference>
<dbReference type="SUPFAM" id="SSF48264">
    <property type="entry name" value="Cytochrome P450"/>
    <property type="match status" value="1"/>
</dbReference>
<organism>
    <name type="scientific">Aspergillus ustus</name>
    <dbReference type="NCBI Taxonomy" id="40382"/>
    <lineage>
        <taxon>Eukaryota</taxon>
        <taxon>Fungi</taxon>
        <taxon>Dikarya</taxon>
        <taxon>Ascomycota</taxon>
        <taxon>Pezizomycotina</taxon>
        <taxon>Eurotiomycetes</taxon>
        <taxon>Eurotiomycetidae</taxon>
        <taxon>Eurotiales</taxon>
        <taxon>Aspergillaceae</taxon>
        <taxon>Aspergillus</taxon>
        <taxon>Aspergillus subgen. Nidulantes</taxon>
    </lineage>
</organism>
<evidence type="ECO:0000250" key="1">
    <source>
        <dbReference type="UniProtKB" id="P04798"/>
    </source>
</evidence>
<evidence type="ECO:0000255" key="2"/>
<evidence type="ECO:0000269" key="3">
    <source>
    </source>
</evidence>
<evidence type="ECO:0000303" key="4">
    <source>
    </source>
</evidence>
<evidence type="ECO:0000305" key="5"/>
<sequence length="548" mass="63447">MDIYVVGPFGHAMDLLPNPTRPFSGRLHELSALALQRPQLVITTLGALLLAAFYLLPSKDPYNLKRIPMVSRSRVLDAYRSGVWWRFILPRFYPYIHEGYLKYSTKDRPFRVWLAQFQIWVYILPLKYLPLVKNQGITELSLRDFIDKATSAQLSSGSFDTFEVQVGSKLLNGNLIDIKPIVQTRTEQILERVIGRPREWRRFNIRALSVQVVKHVSARIAFGEALADNPGFLDAMERYSLNVIPYTLVFRYFNLGPLRYPLLYLIHLRQRQTLAVATRYVTDLIAERQRKEKEHRLDGDERPVDCIQWSMDQDIPDEQKAPEAVAHRLLHISAALIDAPITSMMNVLADIISYARDEVLDDLRAEIVECLAEFDGAWTEASMAKMKKLDSFFQESFRMTSGLIPLTGWRLIKADCFRFDNDLVLPRGSTIVFPTQCIQLDPNIYPNPDKFDYLRFYRMKEHTQSTDARTGKEVPRHEWLSFGHGRQACPGRFYSIRLLKTILGEMMLRYDIRYAGGDRPRPPMIDLEPILAPDTSVELEFRVRQNVT</sequence>
<protein>
    <recommendedName>
        <fullName evidence="4">Aspergilol synthase AuAP450</fullName>
        <ecNumber evidence="3">1.-.-.-</ecNumber>
    </recommendedName>
    <alternativeName>
        <fullName evidence="4">Aspergilols biosynthesis cluster protein AuAP450</fullName>
    </alternativeName>
    <alternativeName>
        <fullName evidence="4">Cytochrome P450 monooxygenase AuAP450</fullName>
    </alternativeName>
</protein>
<keyword id="KW-0349">Heme</keyword>
<keyword id="KW-0408">Iron</keyword>
<keyword id="KW-0472">Membrane</keyword>
<keyword id="KW-0479">Metal-binding</keyword>
<keyword id="KW-0503">Monooxygenase</keyword>
<keyword id="KW-0560">Oxidoreductase</keyword>
<keyword id="KW-0812">Transmembrane</keyword>
<keyword id="KW-1133">Transmembrane helix</keyword>
<reference key="1">
    <citation type="journal article" date="2021" name="Org. Lett.">
        <title>Genome mining Reveals a multiproduct sesterterpenoid biosynthetic gene cluster in Aspergillus ustus.</title>
        <authorList>
            <person name="Guo J."/>
            <person name="Cai Y.S."/>
            <person name="Cheng F."/>
            <person name="Yang C."/>
            <person name="Zhang W."/>
            <person name="Yu W."/>
            <person name="Yan J."/>
            <person name="Deng Z."/>
            <person name="Hong K."/>
        </authorList>
    </citation>
    <scope>NUCLEOTIDE SEQUENCE [MRNA]</scope>
    <scope>FUNCTION</scope>
    <scope>CATALYTIC ACTIVITY</scope>
    <scope>PATHWAY</scope>
    <scope>BIOTECHNOLOGY</scope>
</reference>
<proteinExistence type="evidence at protein level"/>
<accession>P9WEP1</accession>
<accession>A0A889ZB34</accession>
<comment type="function">
    <text evidence="3">Cytochrome P450 monooxygenase; part of the gene cluster that mediates the biosynthesis of aspergiltriene A, aspergildienes A-D and aspergilols A-D (PubMed:33480256). The bifunctional terpene synthase AuAS converts DMAPP and IPP into sesterterpenes (PubMed:33480256). The C-terminal prenyltransferase (PT) domain of AuAS catalyzes formation of GFPP, whereas the N-terminal terpene cyclase (TC) domain catalyzes the cyclization of GFPP into 5 distinct sesterterpenes: aspergiltriene A, aspergildiene A, aspergildiene B, aspergildiene C and aspergildiene D (PubMed:33480256). The cytochrome P450 monooxygenase AP450 then hydroxylates the aspergildienes A, B, C and D to yield the corresponding sesterterpene alcohols, aspergilols A-D (PubMed:33480256).</text>
</comment>
<comment type="cofactor">
    <cofactor evidence="1">
        <name>heme</name>
        <dbReference type="ChEBI" id="CHEBI:30413"/>
    </cofactor>
</comment>
<comment type="pathway">
    <text evidence="3">Secondary metabolite biosynthesis; terpenoid biosynthesis.</text>
</comment>
<comment type="subcellular location">
    <subcellularLocation>
        <location evidence="2">Membrane</location>
        <topology evidence="2">Single-pass membrane protein</topology>
    </subcellularLocation>
</comment>
<comment type="biotechnology">
    <text evidence="3">Aspergilol A shows a weak cytotoxicity toward MCF-7, MDA-MB231, and HepG2 cancer cells lines, with an IC(50) value ranging from 21.21 to 48.76 uM; whereas aspergilol B only shows a weak cytotoxicity against MCF-7 cells, with an IC(50) value of 27.41 uM (PubMed:33480256). None of the aspergilols have antifungal or antibacterial activities (PubMed:33480256).</text>
</comment>
<comment type="similarity">
    <text evidence="5">Belongs to the cytochrome P450 family.</text>
</comment>